<protein>
    <recommendedName>
        <fullName evidence="2">Putative toxin MazF8</fullName>
        <ecNumber>3.1.-.-</ecNumber>
    </recommendedName>
</protein>
<accession>P9WIH7</accession>
<accession>L0T9C1</accession>
<accession>Q50689</accession>
<name>MAZF8_MYCTU</name>
<keyword id="KW-0255">Endonuclease</keyword>
<keyword id="KW-0378">Hydrolase</keyword>
<keyword id="KW-0540">Nuclease</keyword>
<keyword id="KW-1185">Reference proteome</keyword>
<keyword id="KW-1277">Toxin-antitoxin system</keyword>
<reference key="1">
    <citation type="journal article" date="1998" name="Nature">
        <title>Deciphering the biology of Mycobacterium tuberculosis from the complete genome sequence.</title>
        <authorList>
            <person name="Cole S.T."/>
            <person name="Brosch R."/>
            <person name="Parkhill J."/>
            <person name="Garnier T."/>
            <person name="Churcher C.M."/>
            <person name="Harris D.E."/>
            <person name="Gordon S.V."/>
            <person name="Eiglmeier K."/>
            <person name="Gas S."/>
            <person name="Barry C.E. III"/>
            <person name="Tekaia F."/>
            <person name="Badcock K."/>
            <person name="Basham D."/>
            <person name="Brown D."/>
            <person name="Chillingworth T."/>
            <person name="Connor R."/>
            <person name="Davies R.M."/>
            <person name="Devlin K."/>
            <person name="Feltwell T."/>
            <person name="Gentles S."/>
            <person name="Hamlin N."/>
            <person name="Holroyd S."/>
            <person name="Hornsby T."/>
            <person name="Jagels K."/>
            <person name="Krogh A."/>
            <person name="McLean J."/>
            <person name="Moule S."/>
            <person name="Murphy L.D."/>
            <person name="Oliver S."/>
            <person name="Osborne J."/>
            <person name="Quail M.A."/>
            <person name="Rajandream M.A."/>
            <person name="Rogers J."/>
            <person name="Rutter S."/>
            <person name="Seeger K."/>
            <person name="Skelton S."/>
            <person name="Squares S."/>
            <person name="Squares R."/>
            <person name="Sulston J.E."/>
            <person name="Taylor K."/>
            <person name="Whitehead S."/>
            <person name="Barrell B.G."/>
        </authorList>
    </citation>
    <scope>NUCLEOTIDE SEQUENCE [LARGE SCALE GENOMIC DNA]</scope>
    <source>
        <strain>ATCC 25618 / H37Rv</strain>
    </source>
</reference>
<gene>
    <name type="primary">mazF8</name>
    <name type="ordered locus">Rv2274c</name>
    <name type="ORF">MTCY339.36</name>
</gene>
<sequence length="105" mass="11046">MSIARSAQPIGWISCPPKGGSSCCRCGGGYTHIFCVSAWTGLVVDLQAEQVRSVVTERLRRRIGRGAPILAGTLAPGVGLAAQNREFRQFTGRSAPPSATIAFGE</sequence>
<evidence type="ECO:0000250" key="1">
    <source>
        <dbReference type="UniProtKB" id="P9WIH9"/>
    </source>
</evidence>
<evidence type="ECO:0000305" key="2"/>
<feature type="chain" id="PRO_0000104003" description="Putative toxin MazF8">
    <location>
        <begin position="1"/>
        <end position="105"/>
    </location>
</feature>
<comment type="function">
    <text evidence="1 2">Putative toxic component of a type II toxin-antitoxin (TA) system, its cognate toxin is MaZE8. Probably an endoribonuclease (By similarity).</text>
</comment>
<comment type="subunit">
    <text evidence="1">Forms a complex with cognate antitoxin MazE8.</text>
</comment>
<comment type="caution">
    <text evidence="2">Could be the product of a pseudogene.</text>
</comment>
<dbReference type="EC" id="3.1.-.-"/>
<dbReference type="EMBL" id="AL123456">
    <property type="protein sequence ID" value="CCP45055.1"/>
    <property type="molecule type" value="Genomic_DNA"/>
</dbReference>
<dbReference type="PIR" id="F70730">
    <property type="entry name" value="F70730"/>
</dbReference>
<dbReference type="RefSeq" id="NP_216790.1">
    <property type="nucleotide sequence ID" value="NC_000962.3"/>
</dbReference>
<dbReference type="RefSeq" id="WP_003903830.1">
    <property type="nucleotide sequence ID" value="NZ_NVQJ01000008.1"/>
</dbReference>
<dbReference type="STRING" id="83332.Rv2274c"/>
<dbReference type="PaxDb" id="83332-Rv2274c"/>
<dbReference type="DNASU" id="888067"/>
<dbReference type="GeneID" id="888067"/>
<dbReference type="KEGG" id="mtu:Rv2274c"/>
<dbReference type="KEGG" id="mtv:RVBD_2274c"/>
<dbReference type="TubercuList" id="Rv2274c"/>
<dbReference type="InParanoid" id="P9WIH7"/>
<dbReference type="Proteomes" id="UP000001584">
    <property type="component" value="Chromosome"/>
</dbReference>
<dbReference type="GO" id="GO:0004519">
    <property type="term" value="F:endonuclease activity"/>
    <property type="evidence" value="ECO:0007669"/>
    <property type="project" value="UniProtKB-KW"/>
</dbReference>
<proteinExistence type="uncertain"/>
<organism>
    <name type="scientific">Mycobacterium tuberculosis (strain ATCC 25618 / H37Rv)</name>
    <dbReference type="NCBI Taxonomy" id="83332"/>
    <lineage>
        <taxon>Bacteria</taxon>
        <taxon>Bacillati</taxon>
        <taxon>Actinomycetota</taxon>
        <taxon>Actinomycetes</taxon>
        <taxon>Mycobacteriales</taxon>
        <taxon>Mycobacteriaceae</taxon>
        <taxon>Mycobacterium</taxon>
        <taxon>Mycobacterium tuberculosis complex</taxon>
    </lineage>
</organism>